<evidence type="ECO:0000255" key="1"/>
<evidence type="ECO:0000255" key="2">
    <source>
        <dbReference type="PROSITE-ProRule" id="PRU00498"/>
    </source>
</evidence>
<evidence type="ECO:0000269" key="3">
    <source>
    </source>
</evidence>
<evidence type="ECO:0000269" key="4">
    <source>
    </source>
</evidence>
<evidence type="ECO:0000303" key="5">
    <source>
    </source>
</evidence>
<evidence type="ECO:0000305" key="6"/>
<evidence type="ECO:0000305" key="7">
    <source>
    </source>
</evidence>
<evidence type="ECO:0000305" key="8">
    <source>
    </source>
</evidence>
<evidence type="ECO:0000312" key="9">
    <source>
        <dbReference type="EMBL" id="AAL49243.1"/>
    </source>
</evidence>
<evidence type="ECO:0000312" key="10">
    <source>
        <dbReference type="EMBL" id="AAL68332.1"/>
    </source>
</evidence>
<evidence type="ECO:0000312" key="11">
    <source>
        <dbReference type="EMBL" id="ACD81668.1"/>
    </source>
</evidence>
<evidence type="ECO:0000312" key="12">
    <source>
        <dbReference type="FlyBase" id="FBgn0032897"/>
    </source>
</evidence>
<evidence type="ECO:0000312" key="13">
    <source>
        <dbReference type="Proteomes" id="UP000000803"/>
    </source>
</evidence>
<reference evidence="13" key="1">
    <citation type="journal article" date="2000" name="Science">
        <title>The genome sequence of Drosophila melanogaster.</title>
        <authorList>
            <person name="Adams M.D."/>
            <person name="Celniker S.E."/>
            <person name="Holt R.A."/>
            <person name="Evans C.A."/>
            <person name="Gocayne J.D."/>
            <person name="Amanatides P.G."/>
            <person name="Scherer S.E."/>
            <person name="Li P.W."/>
            <person name="Hoskins R.A."/>
            <person name="Galle R.F."/>
            <person name="George R.A."/>
            <person name="Lewis S.E."/>
            <person name="Richards S."/>
            <person name="Ashburner M."/>
            <person name="Henderson S.N."/>
            <person name="Sutton G.G."/>
            <person name="Wortman J.R."/>
            <person name="Yandell M.D."/>
            <person name="Zhang Q."/>
            <person name="Chen L.X."/>
            <person name="Brandon R.C."/>
            <person name="Rogers Y.-H.C."/>
            <person name="Blazej R.G."/>
            <person name="Champe M."/>
            <person name="Pfeiffer B.D."/>
            <person name="Wan K.H."/>
            <person name="Doyle C."/>
            <person name="Baxter E.G."/>
            <person name="Helt G."/>
            <person name="Nelson C.R."/>
            <person name="Miklos G.L.G."/>
            <person name="Abril J.F."/>
            <person name="Agbayani A."/>
            <person name="An H.-J."/>
            <person name="Andrews-Pfannkoch C."/>
            <person name="Baldwin D."/>
            <person name="Ballew R.M."/>
            <person name="Basu A."/>
            <person name="Baxendale J."/>
            <person name="Bayraktaroglu L."/>
            <person name="Beasley E.M."/>
            <person name="Beeson K.Y."/>
            <person name="Benos P.V."/>
            <person name="Berman B.P."/>
            <person name="Bhandari D."/>
            <person name="Bolshakov S."/>
            <person name="Borkova D."/>
            <person name="Botchan M.R."/>
            <person name="Bouck J."/>
            <person name="Brokstein P."/>
            <person name="Brottier P."/>
            <person name="Burtis K.C."/>
            <person name="Busam D.A."/>
            <person name="Butler H."/>
            <person name="Cadieu E."/>
            <person name="Center A."/>
            <person name="Chandra I."/>
            <person name="Cherry J.M."/>
            <person name="Cawley S."/>
            <person name="Dahlke C."/>
            <person name="Davenport L.B."/>
            <person name="Davies P."/>
            <person name="de Pablos B."/>
            <person name="Delcher A."/>
            <person name="Deng Z."/>
            <person name="Mays A.D."/>
            <person name="Dew I."/>
            <person name="Dietz S.M."/>
            <person name="Dodson K."/>
            <person name="Doup L.E."/>
            <person name="Downes M."/>
            <person name="Dugan-Rocha S."/>
            <person name="Dunkov B.C."/>
            <person name="Dunn P."/>
            <person name="Durbin K.J."/>
            <person name="Evangelista C.C."/>
            <person name="Ferraz C."/>
            <person name="Ferriera S."/>
            <person name="Fleischmann W."/>
            <person name="Fosler C."/>
            <person name="Gabrielian A.E."/>
            <person name="Garg N.S."/>
            <person name="Gelbart W.M."/>
            <person name="Glasser K."/>
            <person name="Glodek A."/>
            <person name="Gong F."/>
            <person name="Gorrell J.H."/>
            <person name="Gu Z."/>
            <person name="Guan P."/>
            <person name="Harris M."/>
            <person name="Harris N.L."/>
            <person name="Harvey D.A."/>
            <person name="Heiman T.J."/>
            <person name="Hernandez J.R."/>
            <person name="Houck J."/>
            <person name="Hostin D."/>
            <person name="Houston K.A."/>
            <person name="Howland T.J."/>
            <person name="Wei M.-H."/>
            <person name="Ibegwam C."/>
            <person name="Jalali M."/>
            <person name="Kalush F."/>
            <person name="Karpen G.H."/>
            <person name="Ke Z."/>
            <person name="Kennison J.A."/>
            <person name="Ketchum K.A."/>
            <person name="Kimmel B.E."/>
            <person name="Kodira C.D."/>
            <person name="Kraft C.L."/>
            <person name="Kravitz S."/>
            <person name="Kulp D."/>
            <person name="Lai Z."/>
            <person name="Lasko P."/>
            <person name="Lei Y."/>
            <person name="Levitsky A.A."/>
            <person name="Li J.H."/>
            <person name="Li Z."/>
            <person name="Liang Y."/>
            <person name="Lin X."/>
            <person name="Liu X."/>
            <person name="Mattei B."/>
            <person name="McIntosh T.C."/>
            <person name="McLeod M.P."/>
            <person name="McPherson D."/>
            <person name="Merkulov G."/>
            <person name="Milshina N.V."/>
            <person name="Mobarry C."/>
            <person name="Morris J."/>
            <person name="Moshrefi A."/>
            <person name="Mount S.M."/>
            <person name="Moy M."/>
            <person name="Murphy B."/>
            <person name="Murphy L."/>
            <person name="Muzny D.M."/>
            <person name="Nelson D.L."/>
            <person name="Nelson D.R."/>
            <person name="Nelson K.A."/>
            <person name="Nixon K."/>
            <person name="Nusskern D.R."/>
            <person name="Pacleb J.M."/>
            <person name="Palazzolo M."/>
            <person name="Pittman G.S."/>
            <person name="Pan S."/>
            <person name="Pollard J."/>
            <person name="Puri V."/>
            <person name="Reese M.G."/>
            <person name="Reinert K."/>
            <person name="Remington K."/>
            <person name="Saunders R.D.C."/>
            <person name="Scheeler F."/>
            <person name="Shen H."/>
            <person name="Shue B.C."/>
            <person name="Siden-Kiamos I."/>
            <person name="Simpson M."/>
            <person name="Skupski M.P."/>
            <person name="Smith T.J."/>
            <person name="Spier E."/>
            <person name="Spradling A.C."/>
            <person name="Stapleton M."/>
            <person name="Strong R."/>
            <person name="Sun E."/>
            <person name="Svirskas R."/>
            <person name="Tector C."/>
            <person name="Turner R."/>
            <person name="Venter E."/>
            <person name="Wang A.H."/>
            <person name="Wang X."/>
            <person name="Wang Z.-Y."/>
            <person name="Wassarman D.A."/>
            <person name="Weinstock G.M."/>
            <person name="Weissenbach J."/>
            <person name="Williams S.M."/>
            <person name="Woodage T."/>
            <person name="Worley K.C."/>
            <person name="Wu D."/>
            <person name="Yang S."/>
            <person name="Yao Q.A."/>
            <person name="Ye J."/>
            <person name="Yeh R.-F."/>
            <person name="Zaveri J.S."/>
            <person name="Zhan M."/>
            <person name="Zhang G."/>
            <person name="Zhao Q."/>
            <person name="Zheng L."/>
            <person name="Zheng X.H."/>
            <person name="Zhong F.N."/>
            <person name="Zhong W."/>
            <person name="Zhou X."/>
            <person name="Zhu S.C."/>
            <person name="Zhu X."/>
            <person name="Smith H.O."/>
            <person name="Gibbs R.A."/>
            <person name="Myers E.W."/>
            <person name="Rubin G.M."/>
            <person name="Venter J.C."/>
        </authorList>
    </citation>
    <scope>NUCLEOTIDE SEQUENCE [LARGE SCALE GENOMIC DNA]</scope>
    <source>
        <strain evidence="13">Berkeley</strain>
    </source>
</reference>
<reference evidence="13" key="2">
    <citation type="journal article" date="2002" name="Genome Biol.">
        <title>Annotation of the Drosophila melanogaster euchromatic genome: a systematic review.</title>
        <authorList>
            <person name="Misra S."/>
            <person name="Crosby M.A."/>
            <person name="Mungall C.J."/>
            <person name="Matthews B.B."/>
            <person name="Campbell K.S."/>
            <person name="Hradecky P."/>
            <person name="Huang Y."/>
            <person name="Kaminker J.S."/>
            <person name="Millburn G.H."/>
            <person name="Prochnik S.E."/>
            <person name="Smith C.D."/>
            <person name="Tupy J.L."/>
            <person name="Whitfield E.J."/>
            <person name="Bayraktaroglu L."/>
            <person name="Berman B.P."/>
            <person name="Bettencourt B.R."/>
            <person name="Celniker S.E."/>
            <person name="de Grey A.D.N.J."/>
            <person name="Drysdale R.A."/>
            <person name="Harris N.L."/>
            <person name="Richter J."/>
            <person name="Russo S."/>
            <person name="Schroeder A.J."/>
            <person name="Shu S.Q."/>
            <person name="Stapleton M."/>
            <person name="Yamada C."/>
            <person name="Ashburner M."/>
            <person name="Gelbart W.M."/>
            <person name="Rubin G.M."/>
            <person name="Lewis S.E."/>
        </authorList>
    </citation>
    <scope>GENOME REANNOTATION</scope>
    <source>
        <strain evidence="13">Berkeley</strain>
    </source>
</reference>
<reference evidence="9 10" key="3">
    <citation type="journal article" date="2002" name="Genome Biol.">
        <title>A Drosophila full-length cDNA resource.</title>
        <authorList>
            <person name="Stapleton M."/>
            <person name="Carlson J.W."/>
            <person name="Brokstein P."/>
            <person name="Yu C."/>
            <person name="Champe M."/>
            <person name="George R.A."/>
            <person name="Guarin H."/>
            <person name="Kronmiller B."/>
            <person name="Pacleb J.M."/>
            <person name="Park S."/>
            <person name="Wan K.H."/>
            <person name="Rubin G.M."/>
            <person name="Celniker S.E."/>
        </authorList>
    </citation>
    <scope>NUCLEOTIDE SEQUENCE [LARGE SCALE MRNA] (ISOFORM A)</scope>
    <source>
        <strain evidence="9 10">Berkeley</strain>
        <tissue evidence="9 10">Embryo</tissue>
    </source>
</reference>
<reference evidence="11" key="4">
    <citation type="submission" date="2008-05" db="EMBL/GenBank/DDBJ databases">
        <authorList>
            <person name="Carlson J."/>
            <person name="Booth B."/>
            <person name="Frise E."/>
            <person name="Park S."/>
            <person name="Wan K."/>
            <person name="Yu C."/>
            <person name="Celniker S."/>
        </authorList>
    </citation>
    <scope>NUCLEOTIDE SEQUENCE [LARGE SCALE MRNA] (ISOFORM A)</scope>
    <source>
        <strain evidence="11">Berkeley</strain>
    </source>
</reference>
<reference evidence="6" key="5">
    <citation type="journal article" date="2017" name="Mol. Biol. Evol.">
        <title>Diverse Cis-Regulatory Mechanisms Contribute to Expression Evolution of Tandem Gene Duplicates.</title>
        <authorList>
            <person name="Baudouin-Gonzalez L."/>
            <person name="Santos M.A."/>
            <person name="Tempesta C."/>
            <person name="Sucena E."/>
            <person name="Roch F."/>
            <person name="Tanaka K."/>
        </authorList>
    </citation>
    <scope>SUBCELLULAR LOCATION</scope>
    <scope>DEVELOPMENTAL STAGE</scope>
</reference>
<reference evidence="6" key="6">
    <citation type="journal article" date="2023" name="Elife">
        <title>Belly roll, a GPI-anchored Ly6 protein, regulates Drosophila melanogaster escape behaviors by modulating the excitability of nociceptive peptidergic interneurons.</title>
        <authorList>
            <person name="Li K."/>
            <person name="Tsukasa Y."/>
            <person name="Kurio M."/>
            <person name="Maeta K."/>
            <person name="Tsumadori A."/>
            <person name="Baba S."/>
            <person name="Nishimura R."/>
            <person name="Murakami A."/>
            <person name="Onodera K."/>
            <person name="Morimoto T."/>
            <person name="Uemura T."/>
            <person name="Usui T."/>
        </authorList>
    </citation>
    <scope>FUNCTION</scope>
    <scope>SUBCELLULAR LOCATION</scope>
    <scope>DEVELOPMENTAL STAGE</scope>
    <scope>DISRUPTION PHENOTYPE</scope>
</reference>
<organism evidence="13">
    <name type="scientific">Drosophila melanogaster</name>
    <name type="common">Fruit fly</name>
    <dbReference type="NCBI Taxonomy" id="7227"/>
    <lineage>
        <taxon>Eukaryota</taxon>
        <taxon>Metazoa</taxon>
        <taxon>Ecdysozoa</taxon>
        <taxon>Arthropoda</taxon>
        <taxon>Hexapoda</taxon>
        <taxon>Insecta</taxon>
        <taxon>Pterygota</taxon>
        <taxon>Neoptera</taxon>
        <taxon>Endopterygota</taxon>
        <taxon>Diptera</taxon>
        <taxon>Brachycera</taxon>
        <taxon>Muscomorpha</taxon>
        <taxon>Ephydroidea</taxon>
        <taxon>Drosophilidae</taxon>
        <taxon>Drosophila</taxon>
        <taxon>Sophophora</taxon>
    </lineage>
</organism>
<accession>Q9VII1</accession>
<accession>M9NEV7</accession>
<accession>Q8ST39</accession>
<keyword id="KW-0025">Alternative splicing</keyword>
<keyword id="KW-1003">Cell membrane</keyword>
<keyword id="KW-0966">Cell projection</keyword>
<keyword id="KW-1015">Disulfide bond</keyword>
<keyword id="KW-0325">Glycoprotein</keyword>
<keyword id="KW-0336">GPI-anchor</keyword>
<keyword id="KW-0449">Lipoprotein</keyword>
<keyword id="KW-0472">Membrane</keyword>
<keyword id="KW-1185">Reference proteome</keyword>
<keyword id="KW-0732">Signal</keyword>
<keyword id="KW-0812">Transmembrane</keyword>
<keyword id="KW-1133">Transmembrane helix</keyword>
<feature type="signal peptide" evidence="1">
    <location>
        <begin position="1"/>
        <end position="23"/>
    </location>
</feature>
<feature type="chain" id="PRO_5015100315" description="UPAR/Ly6 domain-containing protein bero" evidence="1">
    <location>
        <begin position="24"/>
        <end position="125"/>
    </location>
</feature>
<feature type="propeptide" id="PRO_0000459695" description="Removed in mature form" evidence="1">
    <location>
        <begin position="126"/>
        <end position="148"/>
    </location>
</feature>
<feature type="transmembrane region" description="Helical" evidence="1">
    <location>
        <begin position="128"/>
        <end position="148"/>
    </location>
</feature>
<feature type="lipid moiety-binding region" description="GPI-anchor amidated asparagine" evidence="1">
    <location>
        <position position="125"/>
    </location>
</feature>
<feature type="glycosylation site" description="N-linked (GlcNAc...) asparagine" evidence="2">
    <location>
        <position position="68"/>
    </location>
</feature>
<feature type="glycosylation site" description="N-linked (GlcNAc...) asparagine" evidence="2">
    <location>
        <position position="125"/>
    </location>
</feature>
<feature type="disulfide bond" evidence="7 8">
    <location>
        <begin position="26"/>
        <end position="72"/>
    </location>
</feature>
<feature type="disulfide bond" evidence="7 8">
    <location>
        <begin position="29"/>
        <end position="37"/>
    </location>
</feature>
<feature type="disulfide bond" evidence="7 8">
    <location>
        <begin position="51"/>
        <end position="90"/>
    </location>
</feature>
<feature type="disulfide bond" evidence="7 8">
    <location>
        <begin position="102"/>
        <end position="116"/>
    </location>
</feature>
<feature type="disulfide bond" evidence="7 8">
    <location>
        <begin position="119"/>
        <end position="124"/>
    </location>
</feature>
<feature type="splice variant" id="VSP_062238" description="In isoform B.">
    <location>
        <begin position="1"/>
        <end position="33"/>
    </location>
</feature>
<feature type="sequence conflict" description="In Ref. 3; AAL49243/AAL68332." evidence="6" ref="3">
    <original>V</original>
    <variation>A</variation>
    <location>
        <position position="118"/>
    </location>
</feature>
<protein>
    <recommendedName>
        <fullName evidence="6">UPAR/Ly6 domain-containing protein bero</fullName>
    </recommendedName>
    <alternativeName>
        <fullName evidence="5">Protein belly roll</fullName>
    </alternativeName>
</protein>
<gene>
    <name evidence="12" type="primary">bero</name>
    <name evidence="12" type="ORF">CG9336</name>
</gene>
<sequence>MVSALKCSLAVAVMISLACSAYAIKCYQCESLTMPKCGLKFEADETLLLDCSRIGPPRYLQNFFPLRNATGCMKKTLESVAGHPQIVRSCYFGDINNIQAGCQSDPSMPFVKQLGCDVCTKDECNGSSSLAPIAGAILLFFGVARLLA</sequence>
<name>BERO_DROME</name>
<comment type="function">
    <text evidence="4">Necessary for the maintenance of persistent fluctuating activities and suppression of acute evoked activities in abdominal leucokinin-producing (ABLK) neurons to negatively regulate neuron excitability involved in nociceptive (perception of pain) behavioral responses.</text>
</comment>
<comment type="subcellular location">
    <subcellularLocation>
        <location evidence="3 4">Cell membrane</location>
        <topology evidence="1">Lipid-anchor</topology>
        <topology evidence="1">GPI-anchor</topology>
    </subcellularLocation>
    <subcellularLocation>
        <location evidence="4">Membrane</location>
        <topology evidence="1">Lipid-anchor</topology>
        <topology evidence="1">GPI-anchor</topology>
    </subcellularLocation>
    <subcellularLocation>
        <location evidence="4">Perikaryon</location>
    </subcellularLocation>
    <subcellularLocation>
        <location evidence="4">Cell projection</location>
        <location evidence="4">Neuron projection</location>
    </subcellularLocation>
</comment>
<comment type="alternative products">
    <event type="alternative splicing"/>
    <isoform>
        <id>Q9VII1-1</id>
        <name evidence="12">A</name>
        <sequence type="displayed"/>
    </isoform>
    <isoform>
        <id>Q9VII1-2</id>
        <name evidence="12">B</name>
        <sequence type="described" ref="VSP_062238"/>
    </isoform>
</comment>
<comment type="developmental stage">
    <text evidence="3 4">Expressed in insulin-producing cells and a subset of eclosion hormone-producing (EH) neurons of the third-instar larval brain (at protein level) (PubMed:37309249). Expressed in all seven pairs of abdominal leucokinin-producing (ABLK) neurons in the lateral region of abdominal ganglions of the third-instar larval ventral nerve cord, but not in other leucokinin-producing neurons (at protein level) (PubMed:37309249). Expressed in third-instar larval non-neuronal tissue, including midline glial cells (at protein level) (PubMed:37309249). Expressed in the embryonic glia of the peripheral nervous system, the wrapping glia of the larval eye disk and the midline glia throughout development (at protein level) (PubMed:28961967). Expressed in the surface glia of the embryonic central nervous system (at protein level) (PubMed:28961967). In the embryo, expressed in Bolwig's organ, heart and anal plate (at protein level) (PubMed:28961967). Expressed in embryonic hindgut epithelial boundary cells, nephrocytic Garland cells and Capa-producing neurons of the central nervous system (at protein level) (PubMed:28961967).</text>
</comment>
<comment type="disruption phenotype">
    <text evidence="4">Enhanced rolling escape behavior in response to nociception (perception of pain).</text>
</comment>
<comment type="miscellaneous">
    <text evidence="5">Larvae display an instinctive escape response to nociception (the sensing of noxious stimuli such as harsh mechanical attacks) consisting of an abrupt bending of the body followed by a corkscrew-like roll reminiscent of an athletics high-jump technique referred to as the belly roll.</text>
</comment>
<comment type="similarity">
    <text evidence="6">Belongs to the quiver family.</text>
</comment>
<dbReference type="EMBL" id="AE014134">
    <property type="protein sequence ID" value="AAF53938.1"/>
    <property type="molecule type" value="Genomic_DNA"/>
</dbReference>
<dbReference type="EMBL" id="AE014134">
    <property type="protein sequence ID" value="AFH03788.1"/>
    <property type="molecule type" value="Genomic_DNA"/>
</dbReference>
<dbReference type="EMBL" id="AY071621">
    <property type="protein sequence ID" value="AAL49243.1"/>
    <property type="molecule type" value="mRNA"/>
</dbReference>
<dbReference type="EMBL" id="AY075525">
    <property type="protein sequence ID" value="AAL68332.1"/>
    <property type="molecule type" value="mRNA"/>
</dbReference>
<dbReference type="EMBL" id="BT032654">
    <property type="protein sequence ID" value="ACD81668.1"/>
    <property type="molecule type" value="mRNA"/>
</dbReference>
<dbReference type="RefSeq" id="NP_001246114.1">
    <molecule id="Q9VII1-2"/>
    <property type="nucleotide sequence ID" value="NM_001259185.2"/>
</dbReference>
<dbReference type="RefSeq" id="NP_610069.2">
    <molecule id="Q9VII1-1"/>
    <property type="nucleotide sequence ID" value="NM_136225.4"/>
</dbReference>
<dbReference type="FunCoup" id="Q9VII1">
    <property type="interactions" value="74"/>
</dbReference>
<dbReference type="IntAct" id="Q9VII1">
    <property type="interactions" value="18"/>
</dbReference>
<dbReference type="STRING" id="7227.FBpp0080956"/>
<dbReference type="GlyGen" id="Q9VII1">
    <property type="glycosylation" value="2 sites"/>
</dbReference>
<dbReference type="PaxDb" id="7227-FBpp0080956"/>
<dbReference type="DNASU" id="35355"/>
<dbReference type="EnsemblMetazoa" id="FBtr0081427">
    <molecule id="Q9VII1-1"/>
    <property type="protein sequence ID" value="FBpp0080956"/>
    <property type="gene ID" value="FBgn0032897"/>
</dbReference>
<dbReference type="EnsemblMetazoa" id="FBtr0307498">
    <molecule id="Q9VII1-2"/>
    <property type="protein sequence ID" value="FBpp0298833"/>
    <property type="gene ID" value="FBgn0032897"/>
</dbReference>
<dbReference type="GeneID" id="35355"/>
<dbReference type="KEGG" id="dme:Dmel_CG9336"/>
<dbReference type="UCSC" id="CG9336-RA">
    <molecule id="Q9VII1-1"/>
    <property type="organism name" value="d. melanogaster"/>
</dbReference>
<dbReference type="AGR" id="FB:FBgn0032897"/>
<dbReference type="CTD" id="35355"/>
<dbReference type="FlyBase" id="FBgn0032897">
    <property type="gene designation" value="bero"/>
</dbReference>
<dbReference type="VEuPathDB" id="VectorBase:FBgn0032897"/>
<dbReference type="eggNOG" id="ENOG502T7Z1">
    <property type="taxonomic scope" value="Eukaryota"/>
</dbReference>
<dbReference type="GeneTree" id="ENSGT00540000073450"/>
<dbReference type="HOGENOM" id="CLU_119218_0_0_1"/>
<dbReference type="InParanoid" id="Q9VII1"/>
<dbReference type="OMA" id="TTPKCGL"/>
<dbReference type="OrthoDB" id="6083863at2759"/>
<dbReference type="BioGRID-ORCS" id="35355">
    <property type="hits" value="0 hits in 1 CRISPR screen"/>
</dbReference>
<dbReference type="GenomeRNAi" id="35355"/>
<dbReference type="Proteomes" id="UP000000803">
    <property type="component" value="Chromosome 2L"/>
</dbReference>
<dbReference type="Bgee" id="FBgn0032897">
    <property type="expression patterns" value="Expressed in oviduct (Drosophila) and 235 other cell types or tissues"/>
</dbReference>
<dbReference type="ExpressionAtlas" id="Q9VII1">
    <property type="expression patterns" value="baseline and differential"/>
</dbReference>
<dbReference type="GO" id="GO:0016020">
    <property type="term" value="C:membrane"/>
    <property type="evidence" value="ECO:0000314"/>
    <property type="project" value="FlyBase"/>
</dbReference>
<dbReference type="GO" id="GO:0032589">
    <property type="term" value="C:neuron projection membrane"/>
    <property type="evidence" value="ECO:0000314"/>
    <property type="project" value="UniProtKB"/>
</dbReference>
<dbReference type="GO" id="GO:0032809">
    <property type="term" value="C:neuronal cell body membrane"/>
    <property type="evidence" value="ECO:0000314"/>
    <property type="project" value="UniProtKB"/>
</dbReference>
<dbReference type="GO" id="GO:0043204">
    <property type="term" value="C:perikaryon"/>
    <property type="evidence" value="ECO:0007669"/>
    <property type="project" value="UniProtKB-SubCell"/>
</dbReference>
<dbReference type="GO" id="GO:0005886">
    <property type="term" value="C:plasma membrane"/>
    <property type="evidence" value="ECO:0007005"/>
    <property type="project" value="FlyBase"/>
</dbReference>
<dbReference type="GO" id="GO:0098552">
    <property type="term" value="C:side of membrane"/>
    <property type="evidence" value="ECO:0007669"/>
    <property type="project" value="UniProtKB-KW"/>
</dbReference>
<dbReference type="GO" id="GO:1904057">
    <property type="term" value="P:negative regulation of sensory perception of pain"/>
    <property type="evidence" value="ECO:0000315"/>
    <property type="project" value="FlyBase"/>
</dbReference>
<dbReference type="GO" id="GO:0032222">
    <property type="term" value="P:regulation of synaptic transmission, cholinergic"/>
    <property type="evidence" value="ECO:0007669"/>
    <property type="project" value="InterPro"/>
</dbReference>
<dbReference type="GO" id="GO:0030431">
    <property type="term" value="P:sleep"/>
    <property type="evidence" value="ECO:0007669"/>
    <property type="project" value="InterPro"/>
</dbReference>
<dbReference type="InterPro" id="IPR031424">
    <property type="entry name" value="QVR-like"/>
</dbReference>
<dbReference type="InterPro" id="IPR050975">
    <property type="entry name" value="Sleep_regulator"/>
</dbReference>
<dbReference type="PANTHER" id="PTHR33562">
    <property type="entry name" value="ATILLA, ISOFORM B-RELATED-RELATED"/>
    <property type="match status" value="1"/>
</dbReference>
<dbReference type="PANTHER" id="PTHR33562:SF18">
    <property type="entry name" value="BOUDIN-RELATED"/>
    <property type="match status" value="1"/>
</dbReference>
<dbReference type="Pfam" id="PF17064">
    <property type="entry name" value="QVR"/>
    <property type="match status" value="1"/>
</dbReference>
<dbReference type="PROSITE" id="PS51257">
    <property type="entry name" value="PROKAR_LIPOPROTEIN"/>
    <property type="match status" value="1"/>
</dbReference>
<proteinExistence type="evidence at protein level"/>